<proteinExistence type="inferred from homology"/>
<protein>
    <recommendedName>
        <fullName evidence="1">Chorismate synthase</fullName>
        <shortName evidence="1">CS</shortName>
        <ecNumber evidence="1">4.2.3.5</ecNumber>
    </recommendedName>
    <alternativeName>
        <fullName evidence="1">5-enolpyruvylshikimate-3-phosphate phospholyase</fullName>
    </alternativeName>
</protein>
<organism>
    <name type="scientific">Xanthomonas oryzae pv. oryzae (strain KACC10331 / KXO85)</name>
    <dbReference type="NCBI Taxonomy" id="291331"/>
    <lineage>
        <taxon>Bacteria</taxon>
        <taxon>Pseudomonadati</taxon>
        <taxon>Pseudomonadota</taxon>
        <taxon>Gammaproteobacteria</taxon>
        <taxon>Lysobacterales</taxon>
        <taxon>Lysobacteraceae</taxon>
        <taxon>Xanthomonas</taxon>
    </lineage>
</organism>
<accession>Q5GXQ6</accession>
<dbReference type="EC" id="4.2.3.5" evidence="1"/>
<dbReference type="EMBL" id="AE013598">
    <property type="protein sequence ID" value="AAW76515.1"/>
    <property type="molecule type" value="Genomic_DNA"/>
</dbReference>
<dbReference type="SMR" id="Q5GXQ6"/>
<dbReference type="STRING" id="291331.XOO3261"/>
<dbReference type="KEGG" id="xoo:XOO3261"/>
<dbReference type="HOGENOM" id="CLU_034547_0_2_6"/>
<dbReference type="UniPathway" id="UPA00053">
    <property type="reaction ID" value="UER00090"/>
</dbReference>
<dbReference type="Proteomes" id="UP000006735">
    <property type="component" value="Chromosome"/>
</dbReference>
<dbReference type="GO" id="GO:0005829">
    <property type="term" value="C:cytosol"/>
    <property type="evidence" value="ECO:0007669"/>
    <property type="project" value="TreeGrafter"/>
</dbReference>
<dbReference type="GO" id="GO:0004107">
    <property type="term" value="F:chorismate synthase activity"/>
    <property type="evidence" value="ECO:0007669"/>
    <property type="project" value="UniProtKB-UniRule"/>
</dbReference>
<dbReference type="GO" id="GO:0010181">
    <property type="term" value="F:FMN binding"/>
    <property type="evidence" value="ECO:0007669"/>
    <property type="project" value="TreeGrafter"/>
</dbReference>
<dbReference type="GO" id="GO:0008652">
    <property type="term" value="P:amino acid biosynthetic process"/>
    <property type="evidence" value="ECO:0007669"/>
    <property type="project" value="UniProtKB-KW"/>
</dbReference>
<dbReference type="GO" id="GO:0009073">
    <property type="term" value="P:aromatic amino acid family biosynthetic process"/>
    <property type="evidence" value="ECO:0007669"/>
    <property type="project" value="UniProtKB-KW"/>
</dbReference>
<dbReference type="GO" id="GO:0009423">
    <property type="term" value="P:chorismate biosynthetic process"/>
    <property type="evidence" value="ECO:0007669"/>
    <property type="project" value="UniProtKB-UniRule"/>
</dbReference>
<dbReference type="CDD" id="cd07304">
    <property type="entry name" value="Chorismate_synthase"/>
    <property type="match status" value="1"/>
</dbReference>
<dbReference type="FunFam" id="3.60.150.10:FF:000001">
    <property type="entry name" value="Chorismate synthase"/>
    <property type="match status" value="1"/>
</dbReference>
<dbReference type="Gene3D" id="3.60.150.10">
    <property type="entry name" value="Chorismate synthase AroC"/>
    <property type="match status" value="1"/>
</dbReference>
<dbReference type="HAMAP" id="MF_00300">
    <property type="entry name" value="Chorismate_synth"/>
    <property type="match status" value="1"/>
</dbReference>
<dbReference type="InterPro" id="IPR000453">
    <property type="entry name" value="Chorismate_synth"/>
</dbReference>
<dbReference type="InterPro" id="IPR035904">
    <property type="entry name" value="Chorismate_synth_AroC_sf"/>
</dbReference>
<dbReference type="InterPro" id="IPR020541">
    <property type="entry name" value="Chorismate_synthase_CS"/>
</dbReference>
<dbReference type="NCBIfam" id="TIGR00033">
    <property type="entry name" value="aroC"/>
    <property type="match status" value="1"/>
</dbReference>
<dbReference type="NCBIfam" id="NF003793">
    <property type="entry name" value="PRK05382.1"/>
    <property type="match status" value="1"/>
</dbReference>
<dbReference type="PANTHER" id="PTHR21085">
    <property type="entry name" value="CHORISMATE SYNTHASE"/>
    <property type="match status" value="1"/>
</dbReference>
<dbReference type="PANTHER" id="PTHR21085:SF0">
    <property type="entry name" value="CHORISMATE SYNTHASE"/>
    <property type="match status" value="1"/>
</dbReference>
<dbReference type="Pfam" id="PF01264">
    <property type="entry name" value="Chorismate_synt"/>
    <property type="match status" value="1"/>
</dbReference>
<dbReference type="PIRSF" id="PIRSF001456">
    <property type="entry name" value="Chorismate_synth"/>
    <property type="match status" value="1"/>
</dbReference>
<dbReference type="SUPFAM" id="SSF103263">
    <property type="entry name" value="Chorismate synthase, AroC"/>
    <property type="match status" value="1"/>
</dbReference>
<dbReference type="PROSITE" id="PS00787">
    <property type="entry name" value="CHORISMATE_SYNTHASE_1"/>
    <property type="match status" value="1"/>
</dbReference>
<dbReference type="PROSITE" id="PS00788">
    <property type="entry name" value="CHORISMATE_SYNTHASE_2"/>
    <property type="match status" value="1"/>
</dbReference>
<dbReference type="PROSITE" id="PS00789">
    <property type="entry name" value="CHORISMATE_SYNTHASE_3"/>
    <property type="match status" value="1"/>
</dbReference>
<name>AROC_XANOR</name>
<gene>
    <name evidence="1" type="primary">aroC</name>
    <name type="ordered locus">XOO3261</name>
</gene>
<reference key="1">
    <citation type="journal article" date="2005" name="Nucleic Acids Res.">
        <title>The genome sequence of Xanthomonas oryzae pathovar oryzae KACC10331, the bacterial blight pathogen of rice.</title>
        <authorList>
            <person name="Lee B.-M."/>
            <person name="Park Y.-J."/>
            <person name="Park D.-S."/>
            <person name="Kang H.-W."/>
            <person name="Kim J.-G."/>
            <person name="Song E.-S."/>
            <person name="Park I.-C."/>
            <person name="Yoon U.-H."/>
            <person name="Hahn J.-H."/>
            <person name="Koo B.-S."/>
            <person name="Lee G.-B."/>
            <person name="Kim H."/>
            <person name="Park H.-S."/>
            <person name="Yoon K.-O."/>
            <person name="Kim J.-H."/>
            <person name="Jung C.-H."/>
            <person name="Koh N.-H."/>
            <person name="Seo J.-S."/>
            <person name="Go S.-J."/>
        </authorList>
    </citation>
    <scope>NUCLEOTIDE SEQUENCE [LARGE SCALE GENOMIC DNA]</scope>
    <source>
        <strain>KACC10331 / KXO85</strain>
    </source>
</reference>
<evidence type="ECO:0000255" key="1">
    <source>
        <dbReference type="HAMAP-Rule" id="MF_00300"/>
    </source>
</evidence>
<evidence type="ECO:0000256" key="2">
    <source>
        <dbReference type="SAM" id="MobiDB-lite"/>
    </source>
</evidence>
<sequence>MSANAFGKLFTVTTFGESHGPAIGCVVDGCPPGLEIAPEEFSHDLQRRASGKSRHTSARREADEIEILSGVYEGRTTGTPIGLLIRNTDQRSKDYSNIAQQFRPGHADYTYWQKYGIRDPRGGGRSSARETTMRVAAGVIAKKWLKQRYGVLVRGFLSQLGEIRPAGFDWDAVEDNPFFWPHAAQVPELETYMDALRKSGDSVGARVDVLAGGVPAGWGEPIYGKLDAELAAALMSINAVKGVEIGDGFASAAQKGTEHRDLITPEGFRSNHAGGILGGISTGQAVTASMVLKPTSSLRLPGATVDADGSVVDVITTGRHDPCVGIRATPIAEAMMALVLMDQALRHRAQCGDVGEISPRIPGQVDV</sequence>
<feature type="chain" id="PRO_0000140680" description="Chorismate synthase">
    <location>
        <begin position="1"/>
        <end position="367"/>
    </location>
</feature>
<feature type="region of interest" description="Disordered" evidence="2">
    <location>
        <begin position="39"/>
        <end position="60"/>
    </location>
</feature>
<feature type="binding site" evidence="1">
    <location>
        <position position="48"/>
    </location>
    <ligand>
        <name>NADP(+)</name>
        <dbReference type="ChEBI" id="CHEBI:58349"/>
    </ligand>
</feature>
<feature type="binding site" evidence="1">
    <location>
        <position position="54"/>
    </location>
    <ligand>
        <name>NADP(+)</name>
        <dbReference type="ChEBI" id="CHEBI:58349"/>
    </ligand>
</feature>
<feature type="binding site" evidence="1">
    <location>
        <begin position="125"/>
        <end position="127"/>
    </location>
    <ligand>
        <name>FMN</name>
        <dbReference type="ChEBI" id="CHEBI:58210"/>
    </ligand>
</feature>
<feature type="binding site" evidence="1">
    <location>
        <begin position="238"/>
        <end position="239"/>
    </location>
    <ligand>
        <name>FMN</name>
        <dbReference type="ChEBI" id="CHEBI:58210"/>
    </ligand>
</feature>
<feature type="binding site" evidence="1">
    <location>
        <position position="278"/>
    </location>
    <ligand>
        <name>FMN</name>
        <dbReference type="ChEBI" id="CHEBI:58210"/>
    </ligand>
</feature>
<feature type="binding site" evidence="1">
    <location>
        <begin position="293"/>
        <end position="297"/>
    </location>
    <ligand>
        <name>FMN</name>
        <dbReference type="ChEBI" id="CHEBI:58210"/>
    </ligand>
</feature>
<feature type="binding site" evidence="1">
    <location>
        <position position="319"/>
    </location>
    <ligand>
        <name>FMN</name>
        <dbReference type="ChEBI" id="CHEBI:58210"/>
    </ligand>
</feature>
<comment type="function">
    <text evidence="1">Catalyzes the anti-1,4-elimination of the C-3 phosphate and the C-6 proR hydrogen from 5-enolpyruvylshikimate-3-phosphate (EPSP) to yield chorismate, which is the branch point compound that serves as the starting substrate for the three terminal pathways of aromatic amino acid biosynthesis. This reaction introduces a second double bond into the aromatic ring system.</text>
</comment>
<comment type="catalytic activity">
    <reaction evidence="1">
        <text>5-O-(1-carboxyvinyl)-3-phosphoshikimate = chorismate + phosphate</text>
        <dbReference type="Rhea" id="RHEA:21020"/>
        <dbReference type="ChEBI" id="CHEBI:29748"/>
        <dbReference type="ChEBI" id="CHEBI:43474"/>
        <dbReference type="ChEBI" id="CHEBI:57701"/>
        <dbReference type="EC" id="4.2.3.5"/>
    </reaction>
</comment>
<comment type="cofactor">
    <cofactor evidence="1">
        <name>FMNH2</name>
        <dbReference type="ChEBI" id="CHEBI:57618"/>
    </cofactor>
    <text evidence="1">Reduced FMN (FMNH(2)).</text>
</comment>
<comment type="pathway">
    <text evidence="1">Metabolic intermediate biosynthesis; chorismate biosynthesis; chorismate from D-erythrose 4-phosphate and phosphoenolpyruvate: step 7/7.</text>
</comment>
<comment type="subunit">
    <text evidence="1">Homotetramer.</text>
</comment>
<comment type="similarity">
    <text evidence="1">Belongs to the chorismate synthase family.</text>
</comment>
<keyword id="KW-0028">Amino-acid biosynthesis</keyword>
<keyword id="KW-0057">Aromatic amino acid biosynthesis</keyword>
<keyword id="KW-0274">FAD</keyword>
<keyword id="KW-0285">Flavoprotein</keyword>
<keyword id="KW-0288">FMN</keyword>
<keyword id="KW-0456">Lyase</keyword>
<keyword id="KW-0521">NADP</keyword>
<keyword id="KW-1185">Reference proteome</keyword>